<evidence type="ECO:0000255" key="1">
    <source>
        <dbReference type="HAMAP-Rule" id="MF_00133"/>
    </source>
</evidence>
<dbReference type="EC" id="4.2.1.20" evidence="1"/>
<dbReference type="EMBL" id="CP000855">
    <property type="protein sequence ID" value="ACJ15632.1"/>
    <property type="molecule type" value="Genomic_DNA"/>
</dbReference>
<dbReference type="RefSeq" id="WP_012571105.1">
    <property type="nucleotide sequence ID" value="NC_011529.1"/>
</dbReference>
<dbReference type="SMR" id="B6YSU5"/>
<dbReference type="STRING" id="523850.TON_0147"/>
<dbReference type="GeneID" id="7017801"/>
<dbReference type="KEGG" id="ton:TON_0147"/>
<dbReference type="PATRIC" id="fig|523850.10.peg.147"/>
<dbReference type="eggNOG" id="arCOG01432">
    <property type="taxonomic scope" value="Archaea"/>
</dbReference>
<dbReference type="HOGENOM" id="CLU_042858_1_0_2"/>
<dbReference type="OrthoDB" id="371827at2157"/>
<dbReference type="UniPathway" id="UPA00035">
    <property type="reaction ID" value="UER00044"/>
</dbReference>
<dbReference type="Proteomes" id="UP000002727">
    <property type="component" value="Chromosome"/>
</dbReference>
<dbReference type="GO" id="GO:0005737">
    <property type="term" value="C:cytoplasm"/>
    <property type="evidence" value="ECO:0007669"/>
    <property type="project" value="TreeGrafter"/>
</dbReference>
<dbReference type="GO" id="GO:0052684">
    <property type="term" value="F:L-serine hydro-lyase (adding indole, L-tryptophan-forming) activity"/>
    <property type="evidence" value="ECO:0007669"/>
    <property type="project" value="TreeGrafter"/>
</dbReference>
<dbReference type="GO" id="GO:0030170">
    <property type="term" value="F:pyridoxal phosphate binding"/>
    <property type="evidence" value="ECO:0007669"/>
    <property type="project" value="InterPro"/>
</dbReference>
<dbReference type="GO" id="GO:0004834">
    <property type="term" value="F:tryptophan synthase activity"/>
    <property type="evidence" value="ECO:0007669"/>
    <property type="project" value="UniProtKB-UniRule"/>
</dbReference>
<dbReference type="CDD" id="cd06446">
    <property type="entry name" value="Trp-synth_B"/>
    <property type="match status" value="1"/>
</dbReference>
<dbReference type="Gene3D" id="3.40.50.1100">
    <property type="match status" value="2"/>
</dbReference>
<dbReference type="HAMAP" id="MF_00133">
    <property type="entry name" value="Trp_synth_beta"/>
    <property type="match status" value="1"/>
</dbReference>
<dbReference type="InterPro" id="IPR006316">
    <property type="entry name" value="Trp_synth_b-like"/>
</dbReference>
<dbReference type="InterPro" id="IPR006653">
    <property type="entry name" value="Trp_synth_b_CS"/>
</dbReference>
<dbReference type="InterPro" id="IPR006654">
    <property type="entry name" value="Trp_synth_beta"/>
</dbReference>
<dbReference type="InterPro" id="IPR023026">
    <property type="entry name" value="Trp_synth_beta/beta-like"/>
</dbReference>
<dbReference type="InterPro" id="IPR001926">
    <property type="entry name" value="TrpB-like_PALP"/>
</dbReference>
<dbReference type="InterPro" id="IPR036052">
    <property type="entry name" value="TrpB-like_PALP_sf"/>
</dbReference>
<dbReference type="NCBIfam" id="NF009057">
    <property type="entry name" value="PRK12391.1"/>
    <property type="match status" value="1"/>
</dbReference>
<dbReference type="NCBIfam" id="TIGR01415">
    <property type="entry name" value="trpB_rel"/>
    <property type="match status" value="1"/>
</dbReference>
<dbReference type="PANTHER" id="PTHR48077:SF6">
    <property type="entry name" value="TRYPTOPHAN SYNTHASE"/>
    <property type="match status" value="1"/>
</dbReference>
<dbReference type="PANTHER" id="PTHR48077">
    <property type="entry name" value="TRYPTOPHAN SYNTHASE-RELATED"/>
    <property type="match status" value="1"/>
</dbReference>
<dbReference type="Pfam" id="PF00291">
    <property type="entry name" value="PALP"/>
    <property type="match status" value="1"/>
</dbReference>
<dbReference type="PIRSF" id="PIRSF001413">
    <property type="entry name" value="Trp_syn_beta"/>
    <property type="match status" value="1"/>
</dbReference>
<dbReference type="PIRSF" id="PIRSF500824">
    <property type="entry name" value="TrpB_prok"/>
    <property type="match status" value="1"/>
</dbReference>
<dbReference type="SUPFAM" id="SSF53686">
    <property type="entry name" value="Tryptophan synthase beta subunit-like PLP-dependent enzymes"/>
    <property type="match status" value="1"/>
</dbReference>
<dbReference type="PROSITE" id="PS00168">
    <property type="entry name" value="TRP_SYNTHASE_BETA"/>
    <property type="match status" value="1"/>
</dbReference>
<gene>
    <name evidence="1" type="primary">trpB</name>
    <name type="ordered locus">TON_0147</name>
</gene>
<protein>
    <recommendedName>
        <fullName evidence="1">Tryptophan synthase beta chain</fullName>
        <ecNumber evidence="1">4.2.1.20</ecNumber>
    </recommendedName>
</protein>
<feature type="chain" id="PRO_1000095831" description="Tryptophan synthase beta chain">
    <location>
        <begin position="1"/>
        <end position="443"/>
    </location>
</feature>
<feature type="modified residue" description="N6-(pyridoxal phosphate)lysine" evidence="1">
    <location>
        <position position="110"/>
    </location>
</feature>
<reference key="1">
    <citation type="journal article" date="2008" name="J. Bacteriol.">
        <title>The complete genome sequence of Thermococcus onnurineus NA1 reveals a mixed heterotrophic and carboxydotrophic metabolism.</title>
        <authorList>
            <person name="Lee H.S."/>
            <person name="Kang S.G."/>
            <person name="Bae S.S."/>
            <person name="Lim J.K."/>
            <person name="Cho Y."/>
            <person name="Kim Y.J."/>
            <person name="Jeon J.H."/>
            <person name="Cha S.-S."/>
            <person name="Kwon K.K."/>
            <person name="Kim H.-T."/>
            <person name="Park C.-J."/>
            <person name="Lee H.-W."/>
            <person name="Kim S.I."/>
            <person name="Chun J."/>
            <person name="Colwell R.R."/>
            <person name="Kim S.-J."/>
            <person name="Lee J.-H."/>
        </authorList>
    </citation>
    <scope>NUCLEOTIDE SEQUENCE [LARGE SCALE GENOMIC DNA]</scope>
    <source>
        <strain>NA1</strain>
    </source>
</reference>
<accession>B6YSU5</accession>
<sequence length="443" mass="49198">MKAVLPDSKMPKRWYNILPDLPEPLAPPLDPETDEPMESEKLLRIFASELVKQEMSMERYIDIPKKVRELYAKIGRPTPLFRATNLEKALETPARIYFKYEGATVTGSHKINTALAQAYYAKKQGIERLVTETGAGQWGTALSLAGALMGINVRVYMARASFYQKPYRKTIMRLYGAEIYPSPSDRTEIGRKFLSEDPNHPGGLGIAISEAIEDVLRDEKARYALGSVLNHVLMHQTVIGLEAKEQMKEFEDPDVIIGCVGGGSNFAGLAYPFVKDRLDGKADYEFIAVEPRAAPSMTRGVYTYDYGDSGGLTPKMKMHTLGHTYYVPPIHAGGLRYHGLAPTLSILINHGIVRPVAYHQTEVFEAARLFAKTEGIVPAPESAHAVKAAIDRALKAKEEGKEEVILFNLSGHGLLDLKGYEDFLDGKLEDYEPEELPALRGEV</sequence>
<comment type="function">
    <text evidence="1">The beta subunit is responsible for the synthesis of L-tryptophan from indole and L-serine.</text>
</comment>
<comment type="catalytic activity">
    <reaction evidence="1">
        <text>(1S,2R)-1-C-(indol-3-yl)glycerol 3-phosphate + L-serine = D-glyceraldehyde 3-phosphate + L-tryptophan + H2O</text>
        <dbReference type="Rhea" id="RHEA:10532"/>
        <dbReference type="ChEBI" id="CHEBI:15377"/>
        <dbReference type="ChEBI" id="CHEBI:33384"/>
        <dbReference type="ChEBI" id="CHEBI:57912"/>
        <dbReference type="ChEBI" id="CHEBI:58866"/>
        <dbReference type="ChEBI" id="CHEBI:59776"/>
        <dbReference type="EC" id="4.2.1.20"/>
    </reaction>
</comment>
<comment type="cofactor">
    <cofactor evidence="1">
        <name>pyridoxal 5'-phosphate</name>
        <dbReference type="ChEBI" id="CHEBI:597326"/>
    </cofactor>
</comment>
<comment type="pathway">
    <text evidence="1">Amino-acid biosynthesis; L-tryptophan biosynthesis; L-tryptophan from chorismate: step 5/5.</text>
</comment>
<comment type="subunit">
    <text evidence="1">Tetramer of two alpha and two beta chains.</text>
</comment>
<comment type="similarity">
    <text evidence="1">Belongs to the TrpB family.</text>
</comment>
<name>TRPB_THEON</name>
<organism>
    <name type="scientific">Thermococcus onnurineus (strain NA1)</name>
    <dbReference type="NCBI Taxonomy" id="523850"/>
    <lineage>
        <taxon>Archaea</taxon>
        <taxon>Methanobacteriati</taxon>
        <taxon>Methanobacteriota</taxon>
        <taxon>Thermococci</taxon>
        <taxon>Thermococcales</taxon>
        <taxon>Thermococcaceae</taxon>
        <taxon>Thermococcus</taxon>
    </lineage>
</organism>
<proteinExistence type="inferred from homology"/>
<keyword id="KW-0028">Amino-acid biosynthesis</keyword>
<keyword id="KW-0057">Aromatic amino acid biosynthesis</keyword>
<keyword id="KW-0456">Lyase</keyword>
<keyword id="KW-0663">Pyridoxal phosphate</keyword>
<keyword id="KW-0822">Tryptophan biosynthesis</keyword>